<evidence type="ECO:0000255" key="1">
    <source>
        <dbReference type="PROSITE-ProRule" id="PRU00441"/>
    </source>
</evidence>
<evidence type="ECO:0000305" key="2"/>
<name>Y3648_BRUA2</name>
<keyword id="KW-0997">Cell inner membrane</keyword>
<keyword id="KW-1003">Cell membrane</keyword>
<keyword id="KW-0472">Membrane</keyword>
<keyword id="KW-1185">Reference proteome</keyword>
<keyword id="KW-0812">Transmembrane</keyword>
<keyword id="KW-1133">Transmembrane helix</keyword>
<keyword id="KW-0813">Transport</keyword>
<protein>
    <recommendedName>
        <fullName>Probable ABC transporter permease protein BAB2_1148</fullName>
    </recommendedName>
</protein>
<reference key="1">
    <citation type="journal article" date="2005" name="Infect. Immun.">
        <title>Whole-genome analyses of speciation events in pathogenic Brucellae.</title>
        <authorList>
            <person name="Chain P.S."/>
            <person name="Comerci D.J."/>
            <person name="Tolmasky M.E."/>
            <person name="Larimer F.W."/>
            <person name="Malfatti S.A."/>
            <person name="Vergez L.M."/>
            <person name="Aguero F."/>
            <person name="Land M.L."/>
            <person name="Ugalde R.A."/>
            <person name="Garcia E."/>
        </authorList>
    </citation>
    <scope>NUCLEOTIDE SEQUENCE [LARGE SCALE GENOMIC DNA]</scope>
    <source>
        <strain>2308</strain>
    </source>
</reference>
<organism>
    <name type="scientific">Brucella abortus (strain 2308)</name>
    <dbReference type="NCBI Taxonomy" id="359391"/>
    <lineage>
        <taxon>Bacteria</taxon>
        <taxon>Pseudomonadati</taxon>
        <taxon>Pseudomonadota</taxon>
        <taxon>Alphaproteobacteria</taxon>
        <taxon>Hyphomicrobiales</taxon>
        <taxon>Brucellaceae</taxon>
        <taxon>Brucella/Ochrobactrum group</taxon>
        <taxon>Brucella</taxon>
    </lineage>
</organism>
<comment type="function">
    <text evidence="2">Probably part of an ABC transporter complex. Probably responsible for the translocation of the substrate across the membrane (Probable).</text>
</comment>
<comment type="subunit">
    <text evidence="2">The complex is composed of two ATP-binding proteins (BAB2_1147), two transmembrane proteins (BAB2_1148) and a solute-binding protein (BAB2_1146).</text>
</comment>
<comment type="subcellular location">
    <subcellularLocation>
        <location evidence="2">Cell inner membrane</location>
        <topology evidence="1">Multi-pass membrane protein</topology>
    </subcellularLocation>
</comment>
<comment type="similarity">
    <text evidence="2">Belongs to the binding-protein-dependent transport system permease family.</text>
</comment>
<feature type="chain" id="PRO_0000284086" description="Probable ABC transporter permease protein BAB2_1148">
    <location>
        <begin position="1"/>
        <end position="250"/>
    </location>
</feature>
<feature type="transmembrane region" description="Helical" evidence="1">
    <location>
        <begin position="12"/>
        <end position="32"/>
    </location>
</feature>
<feature type="transmembrane region" description="Helical" evidence="1">
    <location>
        <begin position="63"/>
        <end position="83"/>
    </location>
</feature>
<feature type="transmembrane region" description="Helical" evidence="1">
    <location>
        <begin position="94"/>
        <end position="114"/>
    </location>
</feature>
<feature type="transmembrane region" description="Helical" evidence="1">
    <location>
        <begin position="122"/>
        <end position="142"/>
    </location>
</feature>
<feature type="transmembrane region" description="Helical" evidence="1">
    <location>
        <begin position="172"/>
        <end position="192"/>
    </location>
</feature>
<feature type="transmembrane region" description="Helical" evidence="1">
    <location>
        <begin position="211"/>
        <end position="231"/>
    </location>
</feature>
<feature type="domain" description="ABC transmembrane type-1" evidence="1">
    <location>
        <begin position="56"/>
        <end position="236"/>
    </location>
</feature>
<sequence length="250" mass="26895">MNARLTGLGLNLLSFAVGIGGWYLLTATGAVVLPGPVDVLERAVTLLLNGQLVGDIFASLRRVLSGFVLGVALAIPVGFLMGWYRIARSLIEPWVQFFRMIPPLAVIPLAIVTLGIDESPKIFVIFLASFLSSVVATYQGVISVDRTLINAARVLGAKDATIFARVIVPASVPFILVGVRIGLGSAWATVVAAELIAAQSGLGYRMQQAQLYYDLPTIFVSLVTIGILGLFMDRLLQAADRRLTQWQERA</sequence>
<dbReference type="EMBL" id="AM040265">
    <property type="protein sequence ID" value="CAJ13314.1"/>
    <property type="molecule type" value="Genomic_DNA"/>
</dbReference>
<dbReference type="RefSeq" id="WP_002967148.1">
    <property type="nucleotide sequence ID" value="NZ_KN046823.1"/>
</dbReference>
<dbReference type="SMR" id="Q2YJB4"/>
<dbReference type="STRING" id="359391.BAB2_1148"/>
<dbReference type="KEGG" id="bmf:BAB2_1148"/>
<dbReference type="PATRIC" id="fig|359391.11.peg.1934"/>
<dbReference type="HOGENOM" id="CLU_046113_1_0_5"/>
<dbReference type="PhylomeDB" id="Q2YJB4"/>
<dbReference type="Proteomes" id="UP000002719">
    <property type="component" value="Chromosome II"/>
</dbReference>
<dbReference type="GO" id="GO:0005886">
    <property type="term" value="C:plasma membrane"/>
    <property type="evidence" value="ECO:0007669"/>
    <property type="project" value="UniProtKB-SubCell"/>
</dbReference>
<dbReference type="GO" id="GO:0055085">
    <property type="term" value="P:transmembrane transport"/>
    <property type="evidence" value="ECO:0007669"/>
    <property type="project" value="InterPro"/>
</dbReference>
<dbReference type="CDD" id="cd06261">
    <property type="entry name" value="TM_PBP2"/>
    <property type="match status" value="1"/>
</dbReference>
<dbReference type="FunFam" id="1.10.3720.10:FF:000003">
    <property type="entry name" value="Aliphatic sulfonate ABC transporter permease"/>
    <property type="match status" value="1"/>
</dbReference>
<dbReference type="Gene3D" id="1.10.3720.10">
    <property type="entry name" value="MetI-like"/>
    <property type="match status" value="1"/>
</dbReference>
<dbReference type="InterPro" id="IPR000515">
    <property type="entry name" value="MetI-like"/>
</dbReference>
<dbReference type="InterPro" id="IPR035906">
    <property type="entry name" value="MetI-like_sf"/>
</dbReference>
<dbReference type="PANTHER" id="PTHR30151:SF0">
    <property type="entry name" value="ABC TRANSPORTER PERMEASE PROTEIN MJ0413-RELATED"/>
    <property type="match status" value="1"/>
</dbReference>
<dbReference type="PANTHER" id="PTHR30151">
    <property type="entry name" value="ALKANE SULFONATE ABC TRANSPORTER-RELATED, MEMBRANE SUBUNIT"/>
    <property type="match status" value="1"/>
</dbReference>
<dbReference type="Pfam" id="PF00528">
    <property type="entry name" value="BPD_transp_1"/>
    <property type="match status" value="1"/>
</dbReference>
<dbReference type="SUPFAM" id="SSF161098">
    <property type="entry name" value="MetI-like"/>
    <property type="match status" value="1"/>
</dbReference>
<dbReference type="PROSITE" id="PS50928">
    <property type="entry name" value="ABC_TM1"/>
    <property type="match status" value="1"/>
</dbReference>
<gene>
    <name type="ordered locus">BAB2_1148</name>
</gene>
<accession>Q2YJB4</accession>
<proteinExistence type="inferred from homology"/>